<keyword id="KW-0007">Acetylation</keyword>
<keyword id="KW-0113">Calvin cycle</keyword>
<keyword id="KW-0120">Carbon dioxide fixation</keyword>
<keyword id="KW-0150">Chloroplast</keyword>
<keyword id="KW-1015">Disulfide bond</keyword>
<keyword id="KW-0456">Lyase</keyword>
<keyword id="KW-0460">Magnesium</keyword>
<keyword id="KW-0479">Metal-binding</keyword>
<keyword id="KW-0488">Methylation</keyword>
<keyword id="KW-0503">Monooxygenase</keyword>
<keyword id="KW-0560">Oxidoreductase</keyword>
<keyword id="KW-0601">Photorespiration</keyword>
<keyword id="KW-0602">Photosynthesis</keyword>
<keyword id="KW-0934">Plastid</keyword>
<keyword id="KW-1185">Reference proteome</keyword>
<accession>A4GYR8</accession>
<dbReference type="EC" id="4.1.1.39" evidence="1"/>
<dbReference type="EMBL" id="EF489041">
    <property type="protein sequence ID" value="ABO36712.1"/>
    <property type="molecule type" value="Genomic_DNA"/>
</dbReference>
<dbReference type="RefSeq" id="YP_001109509.1">
    <property type="nucleotide sequence ID" value="NC_009143.1"/>
</dbReference>
<dbReference type="SMR" id="A4GYR8"/>
<dbReference type="FunCoup" id="A4GYR8">
    <property type="interactions" value="588"/>
</dbReference>
<dbReference type="STRING" id="3694.A4GYR8"/>
<dbReference type="GeneID" id="4929677"/>
<dbReference type="KEGG" id="pop:4929677"/>
<dbReference type="eggNOG" id="ENOG502QTI9">
    <property type="taxonomic scope" value="Eukaryota"/>
</dbReference>
<dbReference type="InParanoid" id="A4GYR8"/>
<dbReference type="OrthoDB" id="563909at2759"/>
<dbReference type="Proteomes" id="UP000006729">
    <property type="component" value="Chloroplast"/>
</dbReference>
<dbReference type="ExpressionAtlas" id="A4GYR8">
    <property type="expression patterns" value="baseline and differential"/>
</dbReference>
<dbReference type="GO" id="GO:0009507">
    <property type="term" value="C:chloroplast"/>
    <property type="evidence" value="ECO:0007669"/>
    <property type="project" value="UniProtKB-SubCell"/>
</dbReference>
<dbReference type="GO" id="GO:0000287">
    <property type="term" value="F:magnesium ion binding"/>
    <property type="evidence" value="ECO:0007669"/>
    <property type="project" value="UniProtKB-UniRule"/>
</dbReference>
<dbReference type="GO" id="GO:0004497">
    <property type="term" value="F:monooxygenase activity"/>
    <property type="evidence" value="ECO:0007669"/>
    <property type="project" value="UniProtKB-KW"/>
</dbReference>
<dbReference type="GO" id="GO:0016984">
    <property type="term" value="F:ribulose-bisphosphate carboxylase activity"/>
    <property type="evidence" value="ECO:0007669"/>
    <property type="project" value="UniProtKB-UniRule"/>
</dbReference>
<dbReference type="GO" id="GO:0009853">
    <property type="term" value="P:photorespiration"/>
    <property type="evidence" value="ECO:0007669"/>
    <property type="project" value="UniProtKB-KW"/>
</dbReference>
<dbReference type="GO" id="GO:0019253">
    <property type="term" value="P:reductive pentose-phosphate cycle"/>
    <property type="evidence" value="ECO:0007669"/>
    <property type="project" value="UniProtKB-UniRule"/>
</dbReference>
<dbReference type="CDD" id="cd08212">
    <property type="entry name" value="RuBisCO_large_I"/>
    <property type="match status" value="1"/>
</dbReference>
<dbReference type="FunFam" id="3.20.20.110:FF:000001">
    <property type="entry name" value="Ribulose bisphosphate carboxylase large chain"/>
    <property type="match status" value="1"/>
</dbReference>
<dbReference type="FunFam" id="3.30.70.150:FF:000001">
    <property type="entry name" value="Ribulose bisphosphate carboxylase large chain"/>
    <property type="match status" value="1"/>
</dbReference>
<dbReference type="Gene3D" id="3.20.20.110">
    <property type="entry name" value="Ribulose bisphosphate carboxylase, large subunit, C-terminal domain"/>
    <property type="match status" value="1"/>
</dbReference>
<dbReference type="Gene3D" id="3.30.70.150">
    <property type="entry name" value="RuBisCO large subunit, N-terminal domain"/>
    <property type="match status" value="1"/>
</dbReference>
<dbReference type="HAMAP" id="MF_01338">
    <property type="entry name" value="RuBisCO_L_type1"/>
    <property type="match status" value="1"/>
</dbReference>
<dbReference type="InterPro" id="IPR033966">
    <property type="entry name" value="RuBisCO"/>
</dbReference>
<dbReference type="InterPro" id="IPR020878">
    <property type="entry name" value="RuBisCo_large_chain_AS"/>
</dbReference>
<dbReference type="InterPro" id="IPR000685">
    <property type="entry name" value="RuBisCO_lsu_C"/>
</dbReference>
<dbReference type="InterPro" id="IPR036376">
    <property type="entry name" value="RuBisCO_lsu_C_sf"/>
</dbReference>
<dbReference type="InterPro" id="IPR017443">
    <property type="entry name" value="RuBisCO_lsu_fd_N"/>
</dbReference>
<dbReference type="InterPro" id="IPR036422">
    <property type="entry name" value="RuBisCO_lsu_N_sf"/>
</dbReference>
<dbReference type="InterPro" id="IPR020888">
    <property type="entry name" value="RuBisCO_lsuI"/>
</dbReference>
<dbReference type="NCBIfam" id="NF003252">
    <property type="entry name" value="PRK04208.1"/>
    <property type="match status" value="1"/>
</dbReference>
<dbReference type="PANTHER" id="PTHR42704">
    <property type="entry name" value="RIBULOSE BISPHOSPHATE CARBOXYLASE"/>
    <property type="match status" value="1"/>
</dbReference>
<dbReference type="PANTHER" id="PTHR42704:SF16">
    <property type="entry name" value="RIBULOSE BISPHOSPHATE CARBOXYLASE LARGE CHAIN"/>
    <property type="match status" value="1"/>
</dbReference>
<dbReference type="Pfam" id="PF00016">
    <property type="entry name" value="RuBisCO_large"/>
    <property type="match status" value="1"/>
</dbReference>
<dbReference type="Pfam" id="PF02788">
    <property type="entry name" value="RuBisCO_large_N"/>
    <property type="match status" value="1"/>
</dbReference>
<dbReference type="SFLD" id="SFLDG01052">
    <property type="entry name" value="RuBisCO"/>
    <property type="match status" value="1"/>
</dbReference>
<dbReference type="SFLD" id="SFLDS00014">
    <property type="entry name" value="RuBisCO"/>
    <property type="match status" value="1"/>
</dbReference>
<dbReference type="SFLD" id="SFLDG00301">
    <property type="entry name" value="RuBisCO-like_proteins"/>
    <property type="match status" value="1"/>
</dbReference>
<dbReference type="SUPFAM" id="SSF51649">
    <property type="entry name" value="RuBisCo, C-terminal domain"/>
    <property type="match status" value="1"/>
</dbReference>
<dbReference type="SUPFAM" id="SSF54966">
    <property type="entry name" value="RuBisCO, large subunit, small (N-terminal) domain"/>
    <property type="match status" value="1"/>
</dbReference>
<dbReference type="PROSITE" id="PS00157">
    <property type="entry name" value="RUBISCO_LARGE"/>
    <property type="match status" value="1"/>
</dbReference>
<protein>
    <recommendedName>
        <fullName evidence="1">Ribulose bisphosphate carboxylase large chain</fullName>
        <shortName evidence="1">RuBisCO large subunit</shortName>
        <ecNumber evidence="1">4.1.1.39</ecNumber>
    </recommendedName>
</protein>
<reference key="1">
    <citation type="journal article" date="2006" name="Science">
        <title>The genome of black cottonwood, Populus trichocarpa (Torr. &amp; Gray).</title>
        <authorList>
            <person name="Tuskan G.A."/>
            <person name="Difazio S."/>
            <person name="Jansson S."/>
            <person name="Bohlmann J."/>
            <person name="Grigoriev I."/>
            <person name="Hellsten U."/>
            <person name="Putnam N."/>
            <person name="Ralph S."/>
            <person name="Rombauts S."/>
            <person name="Salamov A."/>
            <person name="Schein J."/>
            <person name="Sterck L."/>
            <person name="Aerts A."/>
            <person name="Bhalerao R.R."/>
            <person name="Bhalerao R.P."/>
            <person name="Blaudez D."/>
            <person name="Boerjan W."/>
            <person name="Brun A."/>
            <person name="Brunner A."/>
            <person name="Busov V."/>
            <person name="Campbell M."/>
            <person name="Carlson J."/>
            <person name="Chalot M."/>
            <person name="Chapman J."/>
            <person name="Chen G.-L."/>
            <person name="Cooper D."/>
            <person name="Coutinho P.M."/>
            <person name="Couturier J."/>
            <person name="Covert S."/>
            <person name="Cronk Q."/>
            <person name="Cunningham R."/>
            <person name="Davis J."/>
            <person name="Degroeve S."/>
            <person name="Dejardin A."/>
            <person name="dePamphilis C.W."/>
            <person name="Detter J."/>
            <person name="Dirks B."/>
            <person name="Dubchak I."/>
            <person name="Duplessis S."/>
            <person name="Ehlting J."/>
            <person name="Ellis B."/>
            <person name="Gendler K."/>
            <person name="Goodstein D."/>
            <person name="Gribskov M."/>
            <person name="Grimwood J."/>
            <person name="Groover A."/>
            <person name="Gunter L."/>
            <person name="Hamberger B."/>
            <person name="Heinze B."/>
            <person name="Helariutta Y."/>
            <person name="Henrissat B."/>
            <person name="Holligan D."/>
            <person name="Holt R."/>
            <person name="Huang W."/>
            <person name="Islam-Faridi N."/>
            <person name="Jones S."/>
            <person name="Jones-Rhoades M."/>
            <person name="Jorgensen R."/>
            <person name="Joshi C."/>
            <person name="Kangasjaervi J."/>
            <person name="Karlsson J."/>
            <person name="Kelleher C."/>
            <person name="Kirkpatrick R."/>
            <person name="Kirst M."/>
            <person name="Kohler A."/>
            <person name="Kalluri U."/>
            <person name="Larimer F."/>
            <person name="Leebens-Mack J."/>
            <person name="Leple J.-C."/>
            <person name="Locascio P."/>
            <person name="Lou Y."/>
            <person name="Lucas S."/>
            <person name="Martin F."/>
            <person name="Montanini B."/>
            <person name="Napoli C."/>
            <person name="Nelson D.R."/>
            <person name="Nelson C."/>
            <person name="Nieminen K."/>
            <person name="Nilsson O."/>
            <person name="Pereda V."/>
            <person name="Peter G."/>
            <person name="Philippe R."/>
            <person name="Pilate G."/>
            <person name="Poliakov A."/>
            <person name="Razumovskaya J."/>
            <person name="Richardson P."/>
            <person name="Rinaldi C."/>
            <person name="Ritland K."/>
            <person name="Rouze P."/>
            <person name="Ryaboy D."/>
            <person name="Schmutz J."/>
            <person name="Schrader J."/>
            <person name="Segerman B."/>
            <person name="Shin H."/>
            <person name="Siddiqui A."/>
            <person name="Sterky F."/>
            <person name="Terry A."/>
            <person name="Tsai C.-J."/>
            <person name="Uberbacher E."/>
            <person name="Unneberg P."/>
            <person name="Vahala J."/>
            <person name="Wall K."/>
            <person name="Wessler S."/>
            <person name="Yang G."/>
            <person name="Yin T."/>
            <person name="Douglas C."/>
            <person name="Marra M."/>
            <person name="Sandberg G."/>
            <person name="Van de Peer Y."/>
            <person name="Rokhsar D.S."/>
        </authorList>
    </citation>
    <scope>NUCLEOTIDE SEQUENCE [LARGE SCALE GENOMIC DNA]</scope>
    <source>
        <strain>cv. Nisqually</strain>
    </source>
</reference>
<feature type="propeptide" id="PRO_0000300009" evidence="1">
    <location>
        <begin position="1"/>
        <end position="2"/>
    </location>
</feature>
<feature type="chain" id="PRO_0000300010" description="Ribulose bisphosphate carboxylase large chain">
    <location>
        <begin position="3"/>
        <end position="475"/>
    </location>
</feature>
<feature type="active site" description="Proton acceptor" evidence="1">
    <location>
        <position position="175"/>
    </location>
</feature>
<feature type="active site" description="Proton acceptor" evidence="1">
    <location>
        <position position="294"/>
    </location>
</feature>
<feature type="binding site" description="in homodimeric partner" evidence="1">
    <location>
        <position position="123"/>
    </location>
    <ligand>
        <name>substrate</name>
    </ligand>
</feature>
<feature type="binding site" evidence="1">
    <location>
        <position position="173"/>
    </location>
    <ligand>
        <name>substrate</name>
    </ligand>
</feature>
<feature type="binding site" evidence="1">
    <location>
        <position position="177"/>
    </location>
    <ligand>
        <name>substrate</name>
    </ligand>
</feature>
<feature type="binding site" description="via carbamate group" evidence="1">
    <location>
        <position position="201"/>
    </location>
    <ligand>
        <name>Mg(2+)</name>
        <dbReference type="ChEBI" id="CHEBI:18420"/>
    </ligand>
</feature>
<feature type="binding site" evidence="1">
    <location>
        <position position="203"/>
    </location>
    <ligand>
        <name>Mg(2+)</name>
        <dbReference type="ChEBI" id="CHEBI:18420"/>
    </ligand>
</feature>
<feature type="binding site" evidence="1">
    <location>
        <position position="204"/>
    </location>
    <ligand>
        <name>Mg(2+)</name>
        <dbReference type="ChEBI" id="CHEBI:18420"/>
    </ligand>
</feature>
<feature type="binding site" evidence="1">
    <location>
        <position position="295"/>
    </location>
    <ligand>
        <name>substrate</name>
    </ligand>
</feature>
<feature type="binding site" evidence="1">
    <location>
        <position position="327"/>
    </location>
    <ligand>
        <name>substrate</name>
    </ligand>
</feature>
<feature type="binding site" evidence="1">
    <location>
        <position position="379"/>
    </location>
    <ligand>
        <name>substrate</name>
    </ligand>
</feature>
<feature type="site" description="Transition state stabilizer" evidence="1">
    <location>
        <position position="334"/>
    </location>
</feature>
<feature type="modified residue" description="N-acetylproline" evidence="1">
    <location>
        <position position="3"/>
    </location>
</feature>
<feature type="modified residue" description="N6,N6,N6-trimethyllysine" evidence="1">
    <location>
        <position position="14"/>
    </location>
</feature>
<feature type="modified residue" description="N6-carboxylysine" evidence="1">
    <location>
        <position position="201"/>
    </location>
</feature>
<feature type="disulfide bond" description="Interchain; in linked form" evidence="1">
    <location>
        <position position="247"/>
    </location>
</feature>
<evidence type="ECO:0000255" key="1">
    <source>
        <dbReference type="HAMAP-Rule" id="MF_01338"/>
    </source>
</evidence>
<geneLocation type="chloroplast"/>
<name>RBL_POPTR</name>
<sequence>MSPQTETKAGVGFKAGVKDYKLTYYTPDYETKDTDILAAFRVTPQPGVPPEEAGAAVAAESSTGTWTTVWTDGLTSLDRYKGRCYDIEPVAGEENQFIAYVAYPLDLFEEGSVTNMFTSIVGNVFGFKALRALRLEDLRIPPAYVKTFQGPPHGIQVERDKLNKYGRPLLGCTIKPKLGLSAKNYGRAVYECLRGGLDFTKDDENVNSQPFMRWRDRFLFCAEALYKAQAETGEIKGHYLNATAGTCEEMIKRAVFARELGVPIVMHDYLTGGFTANTSLAHYCRDNGLLLHIHRAMHAVIDRQKNHGIHFRVLAKALRMSGGDHIHSGTVVGKLEGERDITLGFVDLLRDDFVEKDRSRGIYFTQDWVSLPGVLPVASGGIHVWHMPALTEIFGDDSVLQFGGGTLGHPWGNAPGAVANRVALEACVQARNEGRDLAREGNEIIREASKWSPELAAACEVWKEIKFEFQAMDTL</sequence>
<gene>
    <name evidence="1" type="primary">rbcL</name>
    <name type="ordered locus">Poptr_cp030</name>
</gene>
<organism>
    <name type="scientific">Populus trichocarpa</name>
    <name type="common">Western balsam poplar</name>
    <name type="synonym">Populus balsamifera subsp. trichocarpa</name>
    <dbReference type="NCBI Taxonomy" id="3694"/>
    <lineage>
        <taxon>Eukaryota</taxon>
        <taxon>Viridiplantae</taxon>
        <taxon>Streptophyta</taxon>
        <taxon>Embryophyta</taxon>
        <taxon>Tracheophyta</taxon>
        <taxon>Spermatophyta</taxon>
        <taxon>Magnoliopsida</taxon>
        <taxon>eudicotyledons</taxon>
        <taxon>Gunneridae</taxon>
        <taxon>Pentapetalae</taxon>
        <taxon>rosids</taxon>
        <taxon>fabids</taxon>
        <taxon>Malpighiales</taxon>
        <taxon>Salicaceae</taxon>
        <taxon>Saliceae</taxon>
        <taxon>Populus</taxon>
    </lineage>
</organism>
<comment type="function">
    <text evidence="1">RuBisCO catalyzes two reactions: the carboxylation of D-ribulose 1,5-bisphosphate, the primary event in carbon dioxide fixation, as well as the oxidative fragmentation of the pentose substrate in the photorespiration process. Both reactions occur simultaneously and in competition at the same active site.</text>
</comment>
<comment type="catalytic activity">
    <reaction evidence="1">
        <text>2 (2R)-3-phosphoglycerate + 2 H(+) = D-ribulose 1,5-bisphosphate + CO2 + H2O</text>
        <dbReference type="Rhea" id="RHEA:23124"/>
        <dbReference type="ChEBI" id="CHEBI:15377"/>
        <dbReference type="ChEBI" id="CHEBI:15378"/>
        <dbReference type="ChEBI" id="CHEBI:16526"/>
        <dbReference type="ChEBI" id="CHEBI:57870"/>
        <dbReference type="ChEBI" id="CHEBI:58272"/>
        <dbReference type="EC" id="4.1.1.39"/>
    </reaction>
</comment>
<comment type="catalytic activity">
    <reaction evidence="1">
        <text>D-ribulose 1,5-bisphosphate + O2 = 2-phosphoglycolate + (2R)-3-phosphoglycerate + 2 H(+)</text>
        <dbReference type="Rhea" id="RHEA:36631"/>
        <dbReference type="ChEBI" id="CHEBI:15378"/>
        <dbReference type="ChEBI" id="CHEBI:15379"/>
        <dbReference type="ChEBI" id="CHEBI:57870"/>
        <dbReference type="ChEBI" id="CHEBI:58033"/>
        <dbReference type="ChEBI" id="CHEBI:58272"/>
    </reaction>
</comment>
<comment type="cofactor">
    <cofactor evidence="1">
        <name>Mg(2+)</name>
        <dbReference type="ChEBI" id="CHEBI:18420"/>
    </cofactor>
    <text evidence="1">Binds 1 Mg(2+) ion per subunit.</text>
</comment>
<comment type="subunit">
    <text evidence="1">Heterohexadecamer of 8 large chains and 8 small chains; disulfide-linked. The disulfide link is formed within the large subunit homodimers.</text>
</comment>
<comment type="subcellular location">
    <subcellularLocation>
        <location>Plastid</location>
        <location>Chloroplast</location>
    </subcellularLocation>
</comment>
<comment type="PTM">
    <text evidence="1">The disulfide bond which can form in the large chain dimeric partners within the hexadecamer appears to be associated with oxidative stress and protein turnover.</text>
</comment>
<comment type="miscellaneous">
    <text evidence="1">The basic functional RuBisCO is composed of a large chain homodimer in a 'head-to-tail' conformation. In form I RuBisCO this homodimer is arranged in a barrel-like tetramer with the small subunits forming a tetrameric 'cap' on each end of the 'barrel'.</text>
</comment>
<comment type="similarity">
    <text evidence="1">Belongs to the RuBisCO large chain family. Type I subfamily.</text>
</comment>
<proteinExistence type="inferred from homology"/>